<comment type="function">
    <text evidence="1 4 7 8 9">Hyperpolarization-activated ion channel that are permeable to sodium and potassium ions (PubMed:15351778, PubMed:28086084). Displays lower selectivity for K(+) over Na(+) ions (PubMed:28086084). Contributes to the native pacemaker currents in heart (If) and in the generation of the I(h) current which controls neuron excitability (PubMed:29936235, PubMed:30351409). Participates in cerebellar mechanisms of motor learning (By similarity). May mediate responses to sour stimuli (By similarity).</text>
</comment>
<comment type="catalytic activity">
    <reaction evidence="7">
        <text>Na(+)(in) = Na(+)(out)</text>
        <dbReference type="Rhea" id="RHEA:34963"/>
        <dbReference type="ChEBI" id="CHEBI:29101"/>
    </reaction>
</comment>
<comment type="catalytic activity">
    <reaction evidence="7">
        <text>K(+)(in) = K(+)(out)</text>
        <dbReference type="Rhea" id="RHEA:29463"/>
        <dbReference type="ChEBI" id="CHEBI:29103"/>
    </reaction>
</comment>
<comment type="activity regulation">
    <text evidence="4 7">Activated by cAMP, and at 10-100 times higher concentrations, also by cGMP. cAMP binding promotes tetramerization and formation of an active channel. Compared to other family members, cAMP has less stimulatory effect on HCN1 because part of the molecules already contain bound cAMP and form homotetramers when cAMP levels are low, this inherent tetramerization in HCN1 results in a weaker response to increased cAMP. Inhibited by Cs(1+), zatebradine, capsazepine and ZD7288.</text>
</comment>
<comment type="subunit">
    <text evidence="1 7">Homotetramer (PubMed:28086084). Heterotetramer with HCN2 (By similarity). The potassium channel is composed of a homo- or heterotetrameric complex of pore-forming subunits. Interacts with KCNE2 (By similarity). Interacts with the SH3 domain of CSK (By similarity).</text>
</comment>
<comment type="interaction">
    <interactant intactId="EBI-11173743">
        <id>O60741</id>
    </interactant>
    <interactant intactId="EBI-1049491">
        <id>Q9UKA4</id>
        <label>AKAP11</label>
    </interactant>
    <organismsDiffer>false</organismsDiffer>
    <experiments>2</experiments>
</comment>
<comment type="interaction">
    <interactant intactId="EBI-11173743">
        <id>O60741</id>
    </interactant>
    <interactant intactId="EBI-5458329">
        <id>Q8IVW6</id>
        <label>ARID3B</label>
    </interactant>
    <organismsDiffer>false</organismsDiffer>
    <experiments>6</experiments>
</comment>
<comment type="interaction">
    <interactant intactId="EBI-11173743">
        <id>O60741</id>
    </interactant>
    <interactant intactId="EBI-905851">
        <id>P01024</id>
        <label>C3</label>
    </interactant>
    <organismsDiffer>false</organismsDiffer>
    <experiments>7</experiments>
</comment>
<comment type="interaction">
    <interactant intactId="EBI-11173743">
        <id>O60741</id>
    </interactant>
    <interactant intactId="EBI-366305">
        <id>Q06787</id>
        <label>FMR1</label>
    </interactant>
    <organismsDiffer>false</organismsDiffer>
    <experiments>4</experiments>
</comment>
<comment type="interaction">
    <interactant intactId="EBI-11173743">
        <id>O60741</id>
    </interactant>
    <interactant intactId="EBI-1753521">
        <id>Q9Y3Q4</id>
        <label>HCN4</label>
    </interactant>
    <organismsDiffer>false</organismsDiffer>
    <experiments>8</experiments>
</comment>
<comment type="interaction">
    <interactant intactId="EBI-11173743">
        <id>O60741</id>
    </interactant>
    <interactant intactId="EBI-299649">
        <id>P22626</id>
        <label>HNRNPA2B1</label>
    </interactant>
    <organismsDiffer>false</organismsDiffer>
    <experiments>3</experiments>
</comment>
<comment type="interaction">
    <interactant intactId="EBI-11173743">
        <id>O60741</id>
    </interactant>
    <interactant intactId="EBI-366258">
        <id>Q16352</id>
        <label>INA</label>
    </interactant>
    <organismsDiffer>false</organismsDiffer>
    <experiments>4</experiments>
</comment>
<comment type="interaction">
    <interactant intactId="EBI-11173743">
        <id>O60741</id>
    </interactant>
    <interactant intactId="EBI-707595">
        <id>P27448</id>
        <label>MARK3</label>
    </interactant>
    <organismsDiffer>false</organismsDiffer>
    <experiments>5</experiments>
</comment>
<comment type="interaction">
    <interactant intactId="EBI-11173743">
        <id>O60741</id>
    </interactant>
    <interactant intactId="EBI-355676">
        <id>P09874</id>
        <label>PARP1</label>
    </interactant>
    <organismsDiffer>false</organismsDiffer>
    <experiments>4</experiments>
</comment>
<comment type="interaction">
    <interactant intactId="EBI-11173743">
        <id>O60741</id>
    </interactant>
    <interactant intactId="EBI-1754151">
        <id>Q9Y5H9</id>
        <label>PCDHA2</label>
    </interactant>
    <organismsDiffer>false</organismsDiffer>
    <experiments>3</experiments>
</comment>
<comment type="interaction">
    <interactant intactId="EBI-11173743">
        <id>O60741</id>
    </interactant>
    <interactant intactId="EBI-1047231">
        <id>P11216</id>
        <label>PYGB</label>
    </interactant>
    <organismsDiffer>false</organismsDiffer>
    <experiments>6</experiments>
</comment>
<comment type="interaction">
    <interactant intactId="EBI-11173743">
        <id>O60741</id>
    </interactant>
    <interactant intactId="EBI-10303490">
        <id>Q9C0C4</id>
        <label>SEMA4C</label>
    </interactant>
    <organismsDiffer>false</organismsDiffer>
    <experiments>3</experiments>
</comment>
<comment type="interaction">
    <interactant intactId="EBI-11173743">
        <id>O60741</id>
    </interactant>
    <interactant intactId="EBI-593303">
        <id>P78362</id>
        <label>SRPK2</label>
    </interactant>
    <organismsDiffer>false</organismsDiffer>
    <experiments>3</experiments>
</comment>
<comment type="interaction">
    <interactant intactId="EBI-11173743">
        <id>O60741</id>
    </interactant>
    <interactant intactId="EBI-2682386">
        <id>Q96PV0</id>
        <label>SYNGAP1</label>
    </interactant>
    <organismsDiffer>false</organismsDiffer>
    <experiments>3</experiments>
</comment>
<comment type="interaction">
    <interactant intactId="EBI-11173743">
        <id>O60741</id>
    </interactant>
    <interactant intactId="EBI-16201983">
        <id>Q4ACU6-1</id>
        <label>Shank3</label>
    </interactant>
    <organismsDiffer>true</organismsDiffer>
    <experiments>4</experiments>
</comment>
<comment type="subcellular location">
    <subcellularLocation>
        <location evidence="4 7 9">Cell membrane</location>
        <topology evidence="7 10">Multi-pass membrane protein</topology>
    </subcellularLocation>
</comment>
<comment type="tissue specificity">
    <text evidence="12">Detected in brain, in particular in amygdala and hippocampus, while expression in caudate nucleus, corpus callosum, substantia nigra, subthalamic nucleus and thalamus is very low or not detectable. Detected at very low levels in muscle and pancreas.</text>
</comment>
<comment type="domain">
    <text evidence="14">The segment S4 is probably the voltage-sensor and is characterized by a series of positively charged amino acids at every third position.</text>
</comment>
<comment type="disease" evidence="5 6 9">
    <disease id="DI-04145">
        <name>Developmental and epileptic encephalopathy 24</name>
        <acronym>DEE24</acronym>
        <description>A disease characterized by early-onset seizures, intellectual disability of varying degrees, and behavioral disturbances or autistic features in most individuals.</description>
        <dbReference type="MIM" id="615871"/>
    </disease>
    <text>The disease is caused by variants affecting the gene represented in this entry.</text>
</comment>
<comment type="disease" evidence="8 9">
    <disease id="DI-05599">
        <name>Generalized epilepsy with febrile seizures plus 10</name>
        <acronym>GEFSP10</acronym>
        <description>An autosomal dominant neurologic disorder with incomplete penetrance, characterized by variable types of seizures including absence, tonic-clonic, febrile, focal, and eyelid myoclonia. Some patients have normal neurologic development. Others have mild-to-moderate intellectual disability or autism spectrum disorder.</description>
        <dbReference type="MIM" id="618482"/>
    </disease>
    <text>The disease is caused by variants affecting the gene represented in this entry.</text>
</comment>
<comment type="similarity">
    <text evidence="13">Belongs to the potassium channel HCN family.</text>
</comment>
<comment type="sequence caution" evidence="13">
    <conflict type="miscellaneous discrepancy">
        <sequence resource="EMBL-CDS" id="AAC39759"/>
    </conflict>
    <text>Contaminating sequence. Potential poly-A sequence.</text>
</comment>
<name>HCN1_HUMAN</name>
<keyword id="KW-0002">3D-structure</keyword>
<keyword id="KW-0114">cAMP</keyword>
<keyword id="KW-0116">cAMP-binding</keyword>
<keyword id="KW-1003">Cell membrane</keyword>
<keyword id="KW-0225">Disease variant</keyword>
<keyword id="KW-0887">Epilepsy</keyword>
<keyword id="KW-0325">Glycoprotein</keyword>
<keyword id="KW-0407">Ion channel</keyword>
<keyword id="KW-0406">Ion transport</keyword>
<keyword id="KW-1071">Ligand-gated ion channel</keyword>
<keyword id="KW-0472">Membrane</keyword>
<keyword id="KW-0547">Nucleotide-binding</keyword>
<keyword id="KW-0630">Potassium</keyword>
<keyword id="KW-0631">Potassium channel</keyword>
<keyword id="KW-0633">Potassium transport</keyword>
<keyword id="KW-1267">Proteomics identification</keyword>
<keyword id="KW-1185">Reference proteome</keyword>
<keyword id="KW-0915">Sodium</keyword>
<keyword id="KW-0894">Sodium channel</keyword>
<keyword id="KW-0739">Sodium transport</keyword>
<keyword id="KW-0812">Transmembrane</keyword>
<keyword id="KW-1133">Transmembrane helix</keyword>
<keyword id="KW-0813">Transport</keyword>
<keyword id="KW-0851">Voltage-gated channel</keyword>
<gene>
    <name type="primary">HCN1</name>
    <name type="synonym">BCNG1</name>
</gene>
<sequence length="890" mass="98796">MEGGGKPNSSSNSRDDGNSVFPAKASATGAGPAAAEKRLGTPPGGGGAGAKEHGNSVCFKVDGGGGGGGGGGGGEEPAGGFEDAEGPRRQYGFMQRQFTSMLQPGVNKFSLRMFGSQKAVEKEQERVKTAGFWIIHPYSDFRFYWDLIMLIMMVGNLVIIPVGITFFTEQTTTPWIIFNVASDTVFLLDLIMNFRTGTVNEDSSEIILDPKVIKMNYLKSWFVVDFISSIPVDYIFLIVEKGMDSEVYKTARALRIVRFTKILSLLRLLRLSRLIRYIHQWEEIFHMTYDLASAVVRIFNLIGMMLLLCHWDGCLQFLVPLLQDFPPDCWVSLNEMVNDSWGKQYSYALFKAMSHMLCIGYGAQAPVSMSDLWITMLSMIVGATCYAMFVGHATALIQSLDSSRRQYQEKYKQVEQYMSFHKLPADMRQKIHDYYEHRYQGKIFDEENILNELNDPLREEIVNFNCRKLVATMPLFANADPNFVTAMLSKLRFEVFQPGDYIIREGAVGKKMYFIQHGVAGVITKSSKEMKLTDGSYFGEICLLTKGRRTASVRADTYCRLYSLSVDNFNEVLEEYPMMRRAFETVAIDRLDRIGKKNSILLQKFQKDLNTGVFNNQENEILKQIVKHDREMVQAIAPINYPQMTTLNSTSSTTTPTSRMRTQSPPVYTATSLSHSNLHSPSPSTQTPQPSAILSPCSYTTAVCSPPVQSPLAARTFHYASPTASQLSLMQQQPQQQVQQSQPPQTQPQQPSPQPQTPGSSTPKNEVHKSTQALHNTNLTREVRPLSASQPSLPHEVSTLISRPHPTVGESLASIPQPVTAVPGTGLQAGGRSTVPQRVTLFRQMSSGAIPPNRGVPPAPPPPAAALPRESSSVLNTDPDAEKPRFASNL</sequence>
<reference key="1">
    <citation type="journal article" date="2004" name="Nature">
        <title>The DNA sequence and comparative analysis of human chromosome 5.</title>
        <authorList>
            <person name="Schmutz J."/>
            <person name="Martin J."/>
            <person name="Terry A."/>
            <person name="Couronne O."/>
            <person name="Grimwood J."/>
            <person name="Lowry S."/>
            <person name="Gordon L.A."/>
            <person name="Scott D."/>
            <person name="Xie G."/>
            <person name="Huang W."/>
            <person name="Hellsten U."/>
            <person name="Tran-Gyamfi M."/>
            <person name="She X."/>
            <person name="Prabhakar S."/>
            <person name="Aerts A."/>
            <person name="Altherr M."/>
            <person name="Bajorek E."/>
            <person name="Black S."/>
            <person name="Branscomb E."/>
            <person name="Caoile C."/>
            <person name="Challacombe J.F."/>
            <person name="Chan Y.M."/>
            <person name="Denys M."/>
            <person name="Detter J.C."/>
            <person name="Escobar J."/>
            <person name="Flowers D."/>
            <person name="Fotopulos D."/>
            <person name="Glavina T."/>
            <person name="Gomez M."/>
            <person name="Gonzales E."/>
            <person name="Goodstein D."/>
            <person name="Grigoriev I."/>
            <person name="Groza M."/>
            <person name="Hammon N."/>
            <person name="Hawkins T."/>
            <person name="Haydu L."/>
            <person name="Israni S."/>
            <person name="Jett J."/>
            <person name="Kadner K."/>
            <person name="Kimball H."/>
            <person name="Kobayashi A."/>
            <person name="Lopez F."/>
            <person name="Lou Y."/>
            <person name="Martinez D."/>
            <person name="Medina C."/>
            <person name="Morgan J."/>
            <person name="Nandkeshwar R."/>
            <person name="Noonan J.P."/>
            <person name="Pitluck S."/>
            <person name="Pollard M."/>
            <person name="Predki P."/>
            <person name="Priest J."/>
            <person name="Ramirez L."/>
            <person name="Retterer J."/>
            <person name="Rodriguez A."/>
            <person name="Rogers S."/>
            <person name="Salamov A."/>
            <person name="Salazar A."/>
            <person name="Thayer N."/>
            <person name="Tice H."/>
            <person name="Tsai M."/>
            <person name="Ustaszewska A."/>
            <person name="Vo N."/>
            <person name="Wheeler J."/>
            <person name="Wu K."/>
            <person name="Yang J."/>
            <person name="Dickson M."/>
            <person name="Cheng J.-F."/>
            <person name="Eichler E.E."/>
            <person name="Olsen A."/>
            <person name="Pennacchio L.A."/>
            <person name="Rokhsar D.S."/>
            <person name="Richardson P."/>
            <person name="Lucas S.M."/>
            <person name="Myers R.M."/>
            <person name="Rubin E.M."/>
        </authorList>
    </citation>
    <scope>NUCLEOTIDE SEQUENCE [LARGE SCALE GENOMIC DNA]</scope>
</reference>
<reference key="2">
    <citation type="journal article" date="1998" name="Cell">
        <title>Identification of a gene encoding a hyperpolarization-activated 'pacemaker' channel of brain.</title>
        <authorList>
            <person name="Santoro B."/>
            <person name="Liu D.T."/>
            <person name="Yao H."/>
            <person name="Bartsch D."/>
            <person name="Kandel E.R."/>
            <person name="Siegelbaum S.A."/>
            <person name="Tibbs G.R."/>
        </authorList>
    </citation>
    <scope>NUCLEOTIDE SEQUENCE [MRNA] OF 122-862</scope>
    <scope>TISSUE SPECIFICITY</scope>
    <source>
        <tissue>Brain</tissue>
    </source>
</reference>
<reference key="3">
    <citation type="journal article" date="2004" name="Br. J. Pharmacol.">
        <title>Characterization of the human HCN1 channel and its inhibition by capsazepine.</title>
        <authorList>
            <person name="Gill C.H."/>
            <person name="Randall A."/>
            <person name="Bates S.A."/>
            <person name="Hill K."/>
            <person name="Owen D."/>
            <person name="Larkman P.M."/>
            <person name="Cairns W."/>
            <person name="Yusaf S.P."/>
            <person name="Murdock P.R."/>
            <person name="Strijbos P.J."/>
            <person name="Powell A.J."/>
            <person name="Benham C.D."/>
            <person name="Davies C.H."/>
        </authorList>
    </citation>
    <scope>FUNCTION</scope>
    <scope>SUBCELLULAR LOCATION</scope>
    <scope>ACTIVITY REGULATION</scope>
</reference>
<reference evidence="15 16" key="4">
    <citation type="journal article" date="2017" name="Cell">
        <title>Structures of the human HCN1 hyperpolarization-activated channel.</title>
        <authorList>
            <person name="Lee C.H."/>
            <person name="MacKinnon R."/>
        </authorList>
    </citation>
    <scope>STRUCTURE BY ELECTRON MICROSCOPY (3.50 ANGSTROMS) OF 1-656 APOPROTEIN AND IN COMPLEX WITH CAMP</scope>
    <scope>FUNCTION</scope>
    <scope>TRANSPORTER ACTIVITY</scope>
    <scope>SUBCELLULAR LOCATION</scope>
    <scope>TOPOLOGY</scope>
    <scope>SUBUNIT</scope>
    <scope>ACTIVITY REGULATION</scope>
</reference>
<reference evidence="17 18" key="5">
    <citation type="journal article" date="2019" name="Cell">
        <title>Voltage Sensor Movements during Hyperpolarization in the HCN Channel.</title>
        <authorList>
            <person name="Lee C.H."/>
            <person name="MacKinnon R."/>
        </authorList>
    </citation>
    <scope>STRUCTURE BY ELECTRON MICROSCOPY (3.04 ANGSTROMS) OF 1-656 IN COMPLEX WITH CAMP</scope>
</reference>
<reference key="6">
    <citation type="journal article" date="2014" name="Nat. Genet.">
        <title>De novo mutations in HCN1 cause early infantile epileptic encephalopathy.</title>
        <authorList>
            <consortium name="EuroEPINOMICS RES Consortium"/>
            <person name="Nava C."/>
            <person name="Dalle C."/>
            <person name="Rastetter A."/>
            <person name="Striano P."/>
            <person name="de Kovel C.G."/>
            <person name="Nabbout R."/>
            <person name="Cances C."/>
            <person name="Ville D."/>
            <person name="Brilstra E.H."/>
            <person name="Gobbi G."/>
            <person name="Raffo E."/>
            <person name="Bouteiller D."/>
            <person name="Marie Y."/>
            <person name="Trouillard O."/>
            <person name="Robbiano A."/>
            <person name="Keren B."/>
            <person name="Agher D."/>
            <person name="Roze E."/>
            <person name="Lesage S."/>
            <person name="Nicolas A."/>
            <person name="Brice A."/>
            <person name="Baulac M."/>
            <person name="Vogt C."/>
            <person name="El Hajj N."/>
            <person name="Schneider E."/>
            <person name="Suls A."/>
            <person name="Weckhuysen S."/>
            <person name="Gormley P."/>
            <person name="Lehesjoki A.E."/>
            <person name="De Jonghe P."/>
            <person name="Helbig I."/>
            <person name="Baulac S."/>
            <person name="Zara F."/>
            <person name="Koeleman B.P."/>
            <person name="Haaf T."/>
            <person name="LeGuern E."/>
            <person name="Depienne C."/>
        </authorList>
    </citation>
    <scope>INVOLVEMENT IN DEE24</scope>
    <scope>VARIANTS DEE24 VAL-47; PHE-100; PRO-272; TYR-279; THR-297 AND HIS-401</scope>
    <scope>CHARACTERIZATION OF VARIANTS DEE24 PHE-100; PRO-272; TYR-279; THR-297 AND HIS-401</scope>
</reference>
<reference key="7">
    <citation type="journal article" date="2017" name="Hum. Mutat.">
        <title>Diagnostic targeted resequencing in 349 patients with drug-resistant pediatric epilepsies identifies causative mutations in 30 different genes.</title>
        <authorList>
            <consortium name="Clinical Study Group"/>
            <person name="Parrini E."/>
            <person name="Marini C."/>
            <person name="Mei D."/>
            <person name="Galuppi A."/>
            <person name="Cellini E."/>
            <person name="Pucatti D."/>
            <person name="Chiti L."/>
            <person name="Rutigliano D."/>
            <person name="Bianchini C."/>
            <person name="Virdo S."/>
            <person name="De Vita D."/>
            <person name="Bigoni S."/>
            <person name="Barba C."/>
            <person name="Mari F."/>
            <person name="Montomoli M."/>
            <person name="Pisano T."/>
            <person name="Rosati A."/>
            <person name="Guerrini R."/>
        </authorList>
    </citation>
    <scope>VARIANTS DEE24 ILE-153 AND ASP-391</scope>
</reference>
<reference key="8">
    <citation type="journal article" date="2018" name="Brain">
        <title>HCN1 mutation spectrum: from neonatal epileptic encephalopathy to benign generalized epilepsy and beyond.</title>
        <authorList>
            <person name="Marini C."/>
            <person name="Porro A."/>
            <person name="Rastetter A."/>
            <person name="Dalle C."/>
            <person name="Rivolta I."/>
            <person name="Bauer D."/>
            <person name="Oegema R."/>
            <person name="Nava C."/>
            <person name="Parrini E."/>
            <person name="Mei D."/>
            <person name="Mercer C."/>
            <person name="Dhamija R."/>
            <person name="Chambers C."/>
            <person name="Coubes C."/>
            <person name="Thevenon J."/>
            <person name="Kuentz P."/>
            <person name="Julia S."/>
            <person name="Pasquier L."/>
            <person name="Dubourg C."/>
            <person name="Carre W."/>
            <person name="Rosati A."/>
            <person name="Melani F."/>
            <person name="Pisano T."/>
            <person name="Giardino M."/>
            <person name="Innes A.M."/>
            <person name="Alembik Y."/>
            <person name="Scheidecker S."/>
            <person name="Santos M."/>
            <person name="Figueiroa S."/>
            <person name="Garrido C."/>
            <person name="Fusco C."/>
            <person name="Frattini D."/>
            <person name="Spagnoli C."/>
            <person name="Binda A."/>
            <person name="Granata T."/>
            <person name="Ragona F."/>
            <person name="Freri E."/>
            <person name="Franceschetti S."/>
            <person name="Canafoglia L."/>
            <person name="Castellotti B."/>
            <person name="Gellera C."/>
            <person name="Milanesi R."/>
            <person name="Mancardi M.M."/>
            <person name="Clark D.R."/>
            <person name="Kok F."/>
            <person name="Helbig K.L."/>
            <person name="Ichikawa S."/>
            <person name="Sadler L."/>
            <person name="Neupauerova J."/>
            <person name="Lassuthova P."/>
            <person name="Sterbova K."/>
            <person name="Laridon A."/>
            <person name="Brilstra E."/>
            <person name="Koeleman B."/>
            <person name="Lemke J.R."/>
            <person name="Zara F."/>
            <person name="Striano P."/>
            <person name="Soblet J."/>
            <person name="Smits G."/>
            <person name="Deconinck N."/>
            <person name="Barbuti A."/>
            <person name="DiFrancesco D."/>
            <person name="LeGuern E."/>
            <person name="Guerrini R."/>
            <person name="Santoro B."/>
            <person name="Hamacher K."/>
            <person name="Thiel G."/>
            <person name="Moroni A."/>
            <person name="DiFrancesco J.C."/>
            <person name="Depienne C."/>
        </authorList>
    </citation>
    <scope>VARIANTS GEFSP10 ALA-85; ARG-171; PRO-172; ARG-243; ILE-260; SER-329; CYS-391; SER-391; MET-414; GLN-590; TYR-680 AND GLY-715</scope>
    <scope>VARIANTS DEE24 TYR-143; ILE-153; GLU-261; LEU-305; ASP-391; LEU-397 AND PRO-399</scope>
    <scope>CHARACTERIZATION OF VARIANTS DEE24 ILE-153; LEU-305; ASP-391; LEU-397 AND PRO-399</scope>
    <scope>CHARACTERIZATION OF VARIANTS GEFSP10 ARG-243; SER-329; CYS-391; SER-391; MET-414 AND GLN-590</scope>
    <scope>VARIANTS CYS-264; THR-275 AND ARG-379</scope>
    <scope>INVOLVEMENT IN DEE24</scope>
    <scope>INVOLVEMENT IN GEFSP10</scope>
    <scope>SUBCELLULAR LOCATION</scope>
    <scope>FUNCTION</scope>
</reference>
<reference key="9">
    <citation type="journal article" date="2018" name="Neurobiol. Dis.">
        <title>A novel de novo HCN1 loss-of-function mutation in genetic generalized epilepsy causing increased neuronal excitability.</title>
        <authorList>
            <person name="Bonzanni M."/>
            <person name="DiFrancesco J.C."/>
            <person name="Milanesi R."/>
            <person name="Campostrini G."/>
            <person name="Castellotti B."/>
            <person name="Bucchi A."/>
            <person name="Baruscotti M."/>
            <person name="Ferrarese C."/>
            <person name="Franceschetti S."/>
            <person name="Canafoglia L."/>
            <person name="Ragona F."/>
            <person name="Freri E."/>
            <person name="Labate A."/>
            <person name="Gambardella A."/>
            <person name="Costa C."/>
            <person name="Rivolta I."/>
            <person name="Gellera C."/>
            <person name="Granata T."/>
            <person name="Barbuti A."/>
            <person name="DiFrancesco D."/>
        </authorList>
    </citation>
    <scope>VARIANT GEFSP10 VAL-157</scope>
    <scope>CHARACTERIZATION OF VARIANT GEFSP10 VAL-157</scope>
    <scope>INVOLVEMENT IN GEFSP10</scope>
    <scope>FUNCTION</scope>
</reference>
<reference key="10">
    <citation type="journal article" date="2021" name="J. Arrhythm.">
        <title>Contribution of HCN1 variant to sinus bradycardia: A case report.</title>
        <authorList>
            <person name="Yu H."/>
            <person name="Gall B."/>
            <person name="Newman M."/>
            <person name="Hathaway Q."/>
            <person name="Brundage K."/>
            <person name="Ammer A."/>
            <person name="Mathers P."/>
            <person name="Siderovski D."/>
            <person name="Hull R.W."/>
        </authorList>
    </citation>
    <scope>VARIANTS 72-GLY--GLY-74 DEL AND ALA-851</scope>
    <scope>CHARACTERIZATION OF VARIANT ALA-851</scope>
</reference>
<proteinExistence type="evidence at protein level"/>
<accession>O60741</accession>
<evidence type="ECO:0000250" key="1">
    <source>
        <dbReference type="UniProtKB" id="O88704"/>
    </source>
</evidence>
<evidence type="ECO:0000255" key="2"/>
<evidence type="ECO:0000256" key="3">
    <source>
        <dbReference type="SAM" id="MobiDB-lite"/>
    </source>
</evidence>
<evidence type="ECO:0000269" key="4">
    <source>
    </source>
</evidence>
<evidence type="ECO:0000269" key="5">
    <source>
    </source>
</evidence>
<evidence type="ECO:0000269" key="6">
    <source>
    </source>
</evidence>
<evidence type="ECO:0000269" key="7">
    <source>
    </source>
</evidence>
<evidence type="ECO:0000269" key="8">
    <source>
    </source>
</evidence>
<evidence type="ECO:0000269" key="9">
    <source>
    </source>
</evidence>
<evidence type="ECO:0000269" key="10">
    <source>
    </source>
</evidence>
<evidence type="ECO:0000269" key="11">
    <source>
    </source>
</evidence>
<evidence type="ECO:0000269" key="12">
    <source>
    </source>
</evidence>
<evidence type="ECO:0000305" key="13"/>
<evidence type="ECO:0000305" key="14">
    <source>
    </source>
</evidence>
<evidence type="ECO:0007744" key="15">
    <source>
        <dbReference type="PDB" id="5U6O"/>
    </source>
</evidence>
<evidence type="ECO:0007744" key="16">
    <source>
        <dbReference type="PDB" id="5U6P"/>
    </source>
</evidence>
<evidence type="ECO:0007744" key="17">
    <source>
        <dbReference type="PDB" id="6UQF"/>
    </source>
</evidence>
<evidence type="ECO:0007744" key="18">
    <source>
        <dbReference type="PDB" id="6UQG"/>
    </source>
</evidence>
<evidence type="ECO:0007829" key="19">
    <source>
        <dbReference type="PDB" id="5U6O"/>
    </source>
</evidence>
<evidence type="ECO:0007829" key="20">
    <source>
        <dbReference type="PDB" id="6UQF"/>
    </source>
</evidence>
<evidence type="ECO:0007829" key="21">
    <source>
        <dbReference type="PDB" id="8UC8"/>
    </source>
</evidence>
<evidence type="ECO:0007829" key="22">
    <source>
        <dbReference type="PDB" id="9BC6"/>
    </source>
</evidence>
<evidence type="ECO:0007829" key="23">
    <source>
        <dbReference type="PDB" id="9BC7"/>
    </source>
</evidence>
<dbReference type="EMBL" id="AC099514">
    <property type="status" value="NOT_ANNOTATED_CDS"/>
    <property type="molecule type" value="Genomic_DNA"/>
</dbReference>
<dbReference type="EMBL" id="AC114975">
    <property type="status" value="NOT_ANNOTATED_CDS"/>
    <property type="molecule type" value="Genomic_DNA"/>
</dbReference>
<dbReference type="EMBL" id="AC117529">
    <property type="status" value="NOT_ANNOTATED_CDS"/>
    <property type="molecule type" value="Genomic_DNA"/>
</dbReference>
<dbReference type="EMBL" id="AC138520">
    <property type="status" value="NOT_ANNOTATED_CDS"/>
    <property type="molecule type" value="Genomic_DNA"/>
</dbReference>
<dbReference type="EMBL" id="AF064876">
    <property type="protein sequence ID" value="AAC39759.1"/>
    <property type="status" value="ALT_SEQ"/>
    <property type="molecule type" value="mRNA"/>
</dbReference>
<dbReference type="CCDS" id="CCDS3952.1"/>
<dbReference type="RefSeq" id="NP_066550.2">
    <property type="nucleotide sequence ID" value="NM_021072.4"/>
</dbReference>
<dbReference type="PDB" id="5U6O">
    <property type="method" value="EM"/>
    <property type="resolution" value="3.50 A"/>
    <property type="chains" value="A/B/C/D=1-890"/>
</dbReference>
<dbReference type="PDB" id="5U6P">
    <property type="method" value="EM"/>
    <property type="resolution" value="3.51 A"/>
    <property type="chains" value="A/B/C/D=1-890"/>
</dbReference>
<dbReference type="PDB" id="6UQF">
    <property type="method" value="EM"/>
    <property type="resolution" value="3.04 A"/>
    <property type="chains" value="A/B/C/D=1-890"/>
</dbReference>
<dbReference type="PDB" id="6UQG">
    <property type="method" value="EM"/>
    <property type="resolution" value="3.54 A"/>
    <property type="chains" value="A/B/C/D=1-890"/>
</dbReference>
<dbReference type="PDB" id="8T4M">
    <property type="method" value="EM"/>
    <property type="resolution" value="3.16 A"/>
    <property type="chains" value="A/B/C/D=1-890"/>
</dbReference>
<dbReference type="PDB" id="8T4Y">
    <property type="method" value="EM"/>
    <property type="resolution" value="3.58 A"/>
    <property type="chains" value="A/B/C/D=1-890"/>
</dbReference>
<dbReference type="PDB" id="8T50">
    <property type="method" value="EM"/>
    <property type="resolution" value="3.60 A"/>
    <property type="chains" value="A/B/C/D=1-890"/>
</dbReference>
<dbReference type="PDB" id="8UC7">
    <property type="method" value="EM"/>
    <property type="resolution" value="2.90 A"/>
    <property type="chains" value="A/B/C/D=1-890"/>
</dbReference>
<dbReference type="PDB" id="8UC8">
    <property type="method" value="EM"/>
    <property type="resolution" value="3.00 A"/>
    <property type="chains" value="A/B/C/D=1-890"/>
</dbReference>
<dbReference type="PDB" id="9BC6">
    <property type="method" value="EM"/>
    <property type="resolution" value="2.50 A"/>
    <property type="chains" value="A/B/C/D=1-890"/>
</dbReference>
<dbReference type="PDB" id="9BC7">
    <property type="method" value="EM"/>
    <property type="resolution" value="3.30 A"/>
    <property type="chains" value="A/B/C/D=1-890"/>
</dbReference>
<dbReference type="PDBsum" id="5U6O"/>
<dbReference type="PDBsum" id="5U6P"/>
<dbReference type="PDBsum" id="6UQF"/>
<dbReference type="PDBsum" id="6UQG"/>
<dbReference type="PDBsum" id="8T4M"/>
<dbReference type="PDBsum" id="8T4Y"/>
<dbReference type="PDBsum" id="8T50"/>
<dbReference type="PDBsum" id="8UC7"/>
<dbReference type="PDBsum" id="8UC8"/>
<dbReference type="PDBsum" id="9BC6"/>
<dbReference type="PDBsum" id="9BC7"/>
<dbReference type="EMDB" id="EMD-20846"/>
<dbReference type="EMDB" id="EMD-20847"/>
<dbReference type="EMDB" id="EMD-41036"/>
<dbReference type="EMDB" id="EMD-41040"/>
<dbReference type="EMDB" id="EMD-41041"/>
<dbReference type="EMDB" id="EMD-42116"/>
<dbReference type="EMDB" id="EMD-42117"/>
<dbReference type="EMDB" id="EMD-44425"/>
<dbReference type="EMDB" id="EMD-44426"/>
<dbReference type="EMDB" id="EMD-8511"/>
<dbReference type="EMDB" id="EMD-8512"/>
<dbReference type="SMR" id="O60741"/>
<dbReference type="BioGRID" id="131543">
    <property type="interactions" value="64"/>
</dbReference>
<dbReference type="ComplexPortal" id="CPX-261">
    <property type="entry name" value="HCN1 channel complex"/>
</dbReference>
<dbReference type="CORUM" id="O60741"/>
<dbReference type="DIP" id="DIP-62038N"/>
<dbReference type="FunCoup" id="O60741">
    <property type="interactions" value="192"/>
</dbReference>
<dbReference type="IntAct" id="O60741">
    <property type="interactions" value="722"/>
</dbReference>
<dbReference type="STRING" id="9606.ENSP00000307342"/>
<dbReference type="BindingDB" id="O60741"/>
<dbReference type="ChEMBL" id="CHEMBL1795171"/>
<dbReference type="DrugCentral" id="O60741"/>
<dbReference type="GuidetoPHARMACOLOGY" id="400"/>
<dbReference type="TCDB" id="1.A.1.5.32">
    <property type="family name" value="the voltage-gated ion channel (vic) superfamily"/>
</dbReference>
<dbReference type="GlyCosmos" id="O60741">
    <property type="glycosylation" value="4 sites, 1 glycan"/>
</dbReference>
<dbReference type="GlyGen" id="O60741">
    <property type="glycosylation" value="4 sites, 1 O-linked glycan (3 sites)"/>
</dbReference>
<dbReference type="iPTMnet" id="O60741"/>
<dbReference type="PhosphoSitePlus" id="O60741"/>
<dbReference type="BioMuta" id="HCN1"/>
<dbReference type="jPOST" id="O60741"/>
<dbReference type="MassIVE" id="O60741"/>
<dbReference type="PaxDb" id="9606-ENSP00000307342"/>
<dbReference type="PeptideAtlas" id="O60741"/>
<dbReference type="ProteomicsDB" id="49583"/>
<dbReference type="Antibodypedia" id="23274">
    <property type="antibodies" value="360 antibodies from 33 providers"/>
</dbReference>
<dbReference type="DNASU" id="348980"/>
<dbReference type="Ensembl" id="ENST00000303230.6">
    <property type="protein sequence ID" value="ENSP00000307342.4"/>
    <property type="gene ID" value="ENSG00000164588.8"/>
</dbReference>
<dbReference type="GeneID" id="348980"/>
<dbReference type="KEGG" id="hsa:348980"/>
<dbReference type="MANE-Select" id="ENST00000303230.6">
    <property type="protein sequence ID" value="ENSP00000307342.4"/>
    <property type="RefSeq nucleotide sequence ID" value="NM_021072.4"/>
    <property type="RefSeq protein sequence ID" value="NP_066550.2"/>
</dbReference>
<dbReference type="UCSC" id="uc003jok.4">
    <property type="organism name" value="human"/>
</dbReference>
<dbReference type="AGR" id="HGNC:4845"/>
<dbReference type="CTD" id="348980"/>
<dbReference type="DisGeNET" id="348980"/>
<dbReference type="GeneCards" id="HCN1"/>
<dbReference type="HGNC" id="HGNC:4845">
    <property type="gene designation" value="HCN1"/>
</dbReference>
<dbReference type="HPA" id="ENSG00000164588">
    <property type="expression patterns" value="Tissue enriched (retina)"/>
</dbReference>
<dbReference type="MalaCards" id="HCN1"/>
<dbReference type="MIM" id="602780">
    <property type="type" value="gene"/>
</dbReference>
<dbReference type="MIM" id="615871">
    <property type="type" value="phenotype"/>
</dbReference>
<dbReference type="MIM" id="618482">
    <property type="type" value="phenotype"/>
</dbReference>
<dbReference type="neXtProt" id="NX_O60741"/>
<dbReference type="OpenTargets" id="ENSG00000164588"/>
<dbReference type="Orphanet" id="36387">
    <property type="disease" value="Genetic epilepsy with febrile seizure plus"/>
</dbReference>
<dbReference type="Orphanet" id="442835">
    <property type="disease" value="Non-specific early-onset epileptic encephalopathy"/>
</dbReference>
<dbReference type="PharmGKB" id="PA77"/>
<dbReference type="VEuPathDB" id="HostDB:ENSG00000164588"/>
<dbReference type="eggNOG" id="KOG0498">
    <property type="taxonomic scope" value="Eukaryota"/>
</dbReference>
<dbReference type="GeneTree" id="ENSGT00940000158207"/>
<dbReference type="HOGENOM" id="CLU_005746_15_1_1"/>
<dbReference type="InParanoid" id="O60741"/>
<dbReference type="OMA" id="TIITRPH"/>
<dbReference type="OrthoDB" id="421226at2759"/>
<dbReference type="PAN-GO" id="O60741">
    <property type="GO annotations" value="7 GO annotations based on evolutionary models"/>
</dbReference>
<dbReference type="PhylomeDB" id="O60741"/>
<dbReference type="TreeFam" id="TF318250"/>
<dbReference type="PathwayCommons" id="O60741"/>
<dbReference type="Reactome" id="R-HSA-1296061">
    <property type="pathway name" value="HCN channels"/>
</dbReference>
<dbReference type="SignaLink" id="O60741"/>
<dbReference type="SIGNOR" id="O60741"/>
<dbReference type="BioGRID-ORCS" id="348980">
    <property type="hits" value="17 hits in 1145 CRISPR screens"/>
</dbReference>
<dbReference type="ChiTaRS" id="HCN1">
    <property type="organism name" value="human"/>
</dbReference>
<dbReference type="GeneWiki" id="HCN1"/>
<dbReference type="GenomeRNAi" id="348980"/>
<dbReference type="Pharos" id="O60741">
    <property type="development level" value="Tclin"/>
</dbReference>
<dbReference type="PRO" id="PR:O60741"/>
<dbReference type="Proteomes" id="UP000005640">
    <property type="component" value="Chromosome 5"/>
</dbReference>
<dbReference type="RNAct" id="O60741">
    <property type="molecule type" value="protein"/>
</dbReference>
<dbReference type="Bgee" id="ENSG00000164588">
    <property type="expression patterns" value="Expressed in endothelial cell and 116 other cell types or tissues"/>
</dbReference>
<dbReference type="ExpressionAtlas" id="O60741">
    <property type="expression patterns" value="baseline and differential"/>
</dbReference>
<dbReference type="GO" id="GO:0097440">
    <property type="term" value="C:apical dendrite"/>
    <property type="evidence" value="ECO:0007669"/>
    <property type="project" value="Ensembl"/>
</dbReference>
<dbReference type="GO" id="GO:0030424">
    <property type="term" value="C:axon"/>
    <property type="evidence" value="ECO:0000318"/>
    <property type="project" value="GO_Central"/>
</dbReference>
<dbReference type="GO" id="GO:0043679">
    <property type="term" value="C:axon terminus"/>
    <property type="evidence" value="ECO:0007669"/>
    <property type="project" value="Ensembl"/>
</dbReference>
<dbReference type="GO" id="GO:0016323">
    <property type="term" value="C:basolateral plasma membrane"/>
    <property type="evidence" value="ECO:0007669"/>
    <property type="project" value="Ensembl"/>
</dbReference>
<dbReference type="GO" id="GO:0009986">
    <property type="term" value="C:cell surface"/>
    <property type="evidence" value="ECO:0007669"/>
    <property type="project" value="Ensembl"/>
</dbReference>
<dbReference type="GO" id="GO:0030425">
    <property type="term" value="C:dendrite"/>
    <property type="evidence" value="ECO:0000318"/>
    <property type="project" value="GO_Central"/>
</dbReference>
<dbReference type="GO" id="GO:0032590">
    <property type="term" value="C:dendrite membrane"/>
    <property type="evidence" value="ECO:0007669"/>
    <property type="project" value="Ensembl"/>
</dbReference>
<dbReference type="GO" id="GO:0043198">
    <property type="term" value="C:dendritic shaft"/>
    <property type="evidence" value="ECO:0007669"/>
    <property type="project" value="Ensembl"/>
</dbReference>
<dbReference type="GO" id="GO:0098978">
    <property type="term" value="C:glutamatergic synapse"/>
    <property type="evidence" value="ECO:0007669"/>
    <property type="project" value="Ensembl"/>
</dbReference>
<dbReference type="GO" id="GO:0098855">
    <property type="term" value="C:HCN channel complex"/>
    <property type="evidence" value="ECO:0000314"/>
    <property type="project" value="UniProtKB"/>
</dbReference>
<dbReference type="GO" id="GO:0043025">
    <property type="term" value="C:neuronal cell body"/>
    <property type="evidence" value="ECO:0007669"/>
    <property type="project" value="Ensembl"/>
</dbReference>
<dbReference type="GO" id="GO:0005886">
    <property type="term" value="C:plasma membrane"/>
    <property type="evidence" value="ECO:0000314"/>
    <property type="project" value="UniProtKB"/>
</dbReference>
<dbReference type="GO" id="GO:0045211">
    <property type="term" value="C:postsynaptic membrane"/>
    <property type="evidence" value="ECO:0007669"/>
    <property type="project" value="Ensembl"/>
</dbReference>
<dbReference type="GO" id="GO:0048787">
    <property type="term" value="C:presynaptic active zone membrane"/>
    <property type="evidence" value="ECO:0007669"/>
    <property type="project" value="Ensembl"/>
</dbReference>
<dbReference type="GO" id="GO:0030552">
    <property type="term" value="F:cAMP binding"/>
    <property type="evidence" value="ECO:0000314"/>
    <property type="project" value="UniProtKB"/>
</dbReference>
<dbReference type="GO" id="GO:0042802">
    <property type="term" value="F:identical protein binding"/>
    <property type="evidence" value="ECO:0007669"/>
    <property type="project" value="Ensembl"/>
</dbReference>
<dbReference type="GO" id="GO:0140232">
    <property type="term" value="F:intracellular cAMP-activated cation channel activity involved in regulation of presynaptic membrane potential"/>
    <property type="evidence" value="ECO:0007669"/>
    <property type="project" value="Ensembl"/>
</dbReference>
<dbReference type="GO" id="GO:0005222">
    <property type="term" value="F:intracellularly cAMP-activated cation channel activity"/>
    <property type="evidence" value="ECO:0000250"/>
    <property type="project" value="UniProtKB"/>
</dbReference>
<dbReference type="GO" id="GO:0005547">
    <property type="term" value="F:phosphatidylinositol-3,4,5-trisphosphate binding"/>
    <property type="evidence" value="ECO:0007669"/>
    <property type="project" value="Ensembl"/>
</dbReference>
<dbReference type="GO" id="GO:0005546">
    <property type="term" value="F:phosphatidylinositol-4,5-bisphosphate binding"/>
    <property type="evidence" value="ECO:0007669"/>
    <property type="project" value="Ensembl"/>
</dbReference>
<dbReference type="GO" id="GO:0005267">
    <property type="term" value="F:potassium channel activity"/>
    <property type="evidence" value="ECO:0000303"/>
    <property type="project" value="UniProtKB"/>
</dbReference>
<dbReference type="GO" id="GO:0022843">
    <property type="term" value="F:voltage-gated monoatomic cation channel activity"/>
    <property type="evidence" value="ECO:0000314"/>
    <property type="project" value="UniProtKB"/>
</dbReference>
<dbReference type="GO" id="GO:0005249">
    <property type="term" value="F:voltage-gated potassium channel activity"/>
    <property type="evidence" value="ECO:0000315"/>
    <property type="project" value="UniProtKB"/>
</dbReference>
<dbReference type="GO" id="GO:0005248">
    <property type="term" value="F:voltage-gated sodium channel activity"/>
    <property type="evidence" value="ECO:0000315"/>
    <property type="project" value="UniProtKB"/>
</dbReference>
<dbReference type="GO" id="GO:0045176">
    <property type="term" value="P:apical protein localization"/>
    <property type="evidence" value="ECO:0007669"/>
    <property type="project" value="Ensembl"/>
</dbReference>
<dbReference type="GO" id="GO:0071320">
    <property type="term" value="P:cellular response to cAMP"/>
    <property type="evidence" value="ECO:0000314"/>
    <property type="project" value="UniProtKB"/>
</dbReference>
<dbReference type="GO" id="GO:0035458">
    <property type="term" value="P:cellular response to interferon-beta"/>
    <property type="evidence" value="ECO:0007669"/>
    <property type="project" value="Ensembl"/>
</dbReference>
<dbReference type="GO" id="GO:0051867">
    <property type="term" value="P:general adaptation syndrome, behavioral process"/>
    <property type="evidence" value="ECO:0007669"/>
    <property type="project" value="Ensembl"/>
</dbReference>
<dbReference type="GO" id="GO:0042711">
    <property type="term" value="P:maternal behavior"/>
    <property type="evidence" value="ECO:0007669"/>
    <property type="project" value="Ensembl"/>
</dbReference>
<dbReference type="GO" id="GO:0045759">
    <property type="term" value="P:negative regulation of action potential"/>
    <property type="evidence" value="ECO:0007669"/>
    <property type="project" value="Ensembl"/>
</dbReference>
<dbReference type="GO" id="GO:0051967">
    <property type="term" value="P:negative regulation of synaptic transmission, glutamatergic"/>
    <property type="evidence" value="ECO:0000266"/>
    <property type="project" value="ComplexPortal"/>
</dbReference>
<dbReference type="GO" id="GO:0019228">
    <property type="term" value="P:neuronal action potential"/>
    <property type="evidence" value="ECO:0007669"/>
    <property type="project" value="Ensembl"/>
</dbReference>
<dbReference type="GO" id="GO:1902632">
    <property type="term" value="P:positive regulation of membrane hyperpolarization"/>
    <property type="evidence" value="ECO:0007669"/>
    <property type="project" value="Ensembl"/>
</dbReference>
<dbReference type="GO" id="GO:1990573">
    <property type="term" value="P:potassium ion import across plasma membrane"/>
    <property type="evidence" value="ECO:0000303"/>
    <property type="project" value="ComplexPortal"/>
</dbReference>
<dbReference type="GO" id="GO:0071805">
    <property type="term" value="P:potassium ion transmembrane transport"/>
    <property type="evidence" value="ECO:0000315"/>
    <property type="project" value="UniProtKB"/>
</dbReference>
<dbReference type="GO" id="GO:0051289">
    <property type="term" value="P:protein homotetramerization"/>
    <property type="evidence" value="ECO:0000314"/>
    <property type="project" value="UniProtKB"/>
</dbReference>
<dbReference type="GO" id="GO:0086091">
    <property type="term" value="P:regulation of heart rate by cardiac conduction"/>
    <property type="evidence" value="ECO:0000303"/>
    <property type="project" value="ComplexPortal"/>
</dbReference>
<dbReference type="GO" id="GO:0003254">
    <property type="term" value="P:regulation of membrane depolarization"/>
    <property type="evidence" value="ECO:0000314"/>
    <property type="project" value="ComplexPortal"/>
</dbReference>
<dbReference type="GO" id="GO:0042391">
    <property type="term" value="P:regulation of membrane potential"/>
    <property type="evidence" value="ECO:0000315"/>
    <property type="project" value="UniProtKB"/>
</dbReference>
<dbReference type="GO" id="GO:0098907">
    <property type="term" value="P:regulation of SA node cell action potential"/>
    <property type="evidence" value="ECO:0000303"/>
    <property type="project" value="ComplexPortal"/>
</dbReference>
<dbReference type="GO" id="GO:0051592">
    <property type="term" value="P:response to calcium ion"/>
    <property type="evidence" value="ECO:0007669"/>
    <property type="project" value="Ensembl"/>
</dbReference>
<dbReference type="GO" id="GO:1902065">
    <property type="term" value="P:response to L-glutamate"/>
    <property type="evidence" value="ECO:0007669"/>
    <property type="project" value="Ensembl"/>
</dbReference>
<dbReference type="GO" id="GO:0046549">
    <property type="term" value="P:retinal cone cell development"/>
    <property type="evidence" value="ECO:0007669"/>
    <property type="project" value="Ensembl"/>
</dbReference>
<dbReference type="GO" id="GO:0098719">
    <property type="term" value="P:sodium ion import across plasma membrane"/>
    <property type="evidence" value="ECO:0000303"/>
    <property type="project" value="ComplexPortal"/>
</dbReference>
<dbReference type="GO" id="GO:0035725">
    <property type="term" value="P:sodium ion transmembrane transport"/>
    <property type="evidence" value="ECO:0000315"/>
    <property type="project" value="UniProtKB"/>
</dbReference>
<dbReference type="CDD" id="cd00038">
    <property type="entry name" value="CAP_ED"/>
    <property type="match status" value="1"/>
</dbReference>
<dbReference type="DisProt" id="DP01317"/>
<dbReference type="FunFam" id="1.10.287.70:FF:000031">
    <property type="entry name" value="Potassium/sodium hyperpolarization-activated cyclic nucleotide-gated channel 1, putative"/>
    <property type="match status" value="1"/>
</dbReference>
<dbReference type="FunFam" id="1.10.287.630:FF:000002">
    <property type="entry name" value="Potassium/sodium hyperpolarization-activated cyclic nucleotide-gated channel 4"/>
    <property type="match status" value="1"/>
</dbReference>
<dbReference type="FunFam" id="2.60.120.10:FF:000007">
    <property type="entry name" value="Putative potassium/sodium hyperpolarization-activated cyclic nucleotide-gated channel 2"/>
    <property type="match status" value="1"/>
</dbReference>
<dbReference type="Gene3D" id="1.10.287.70">
    <property type="match status" value="1"/>
</dbReference>
<dbReference type="Gene3D" id="1.10.287.630">
    <property type="entry name" value="Helix hairpin bin"/>
    <property type="match status" value="1"/>
</dbReference>
<dbReference type="Gene3D" id="2.60.120.10">
    <property type="entry name" value="Jelly Rolls"/>
    <property type="match status" value="1"/>
</dbReference>
<dbReference type="InterPro" id="IPR018488">
    <property type="entry name" value="cNMP-bd_CS"/>
</dbReference>
<dbReference type="InterPro" id="IPR000595">
    <property type="entry name" value="cNMP-bd_dom"/>
</dbReference>
<dbReference type="InterPro" id="IPR018490">
    <property type="entry name" value="cNMP-bd_dom_sf"/>
</dbReference>
<dbReference type="InterPro" id="IPR005821">
    <property type="entry name" value="Ion_trans_dom"/>
</dbReference>
<dbReference type="InterPro" id="IPR013621">
    <property type="entry name" value="Ion_trans_N"/>
</dbReference>
<dbReference type="InterPro" id="IPR051413">
    <property type="entry name" value="K/Na_HCN_channel"/>
</dbReference>
<dbReference type="InterPro" id="IPR003938">
    <property type="entry name" value="K_chnl_volt-dep_EAG/ELK/ERG"/>
</dbReference>
<dbReference type="InterPro" id="IPR014710">
    <property type="entry name" value="RmlC-like_jellyroll"/>
</dbReference>
<dbReference type="PANTHER" id="PTHR45689">
    <property type="entry name" value="I[[H]] CHANNEL, ISOFORM E"/>
    <property type="match status" value="1"/>
</dbReference>
<dbReference type="PANTHER" id="PTHR45689:SF3">
    <property type="entry name" value="POTASSIUM_SODIUM HYPERPOLARIZATION-ACTIVATED CYCLIC NUCLEOTIDE-GATED CHANNEL 1"/>
    <property type="match status" value="1"/>
</dbReference>
<dbReference type="Pfam" id="PF00027">
    <property type="entry name" value="cNMP_binding"/>
    <property type="match status" value="1"/>
</dbReference>
<dbReference type="Pfam" id="PF00520">
    <property type="entry name" value="Ion_trans"/>
    <property type="match status" value="1"/>
</dbReference>
<dbReference type="Pfam" id="PF08412">
    <property type="entry name" value="Ion_trans_N"/>
    <property type="match status" value="1"/>
</dbReference>
<dbReference type="PRINTS" id="PR01463">
    <property type="entry name" value="EAGCHANLFMLY"/>
</dbReference>
<dbReference type="SMART" id="SM00100">
    <property type="entry name" value="cNMP"/>
    <property type="match status" value="1"/>
</dbReference>
<dbReference type="SUPFAM" id="SSF51206">
    <property type="entry name" value="cAMP-binding domain-like"/>
    <property type="match status" value="1"/>
</dbReference>
<dbReference type="SUPFAM" id="SSF81324">
    <property type="entry name" value="Voltage-gated potassium channels"/>
    <property type="match status" value="1"/>
</dbReference>
<dbReference type="PROSITE" id="PS00888">
    <property type="entry name" value="CNMP_BINDING_1"/>
    <property type="match status" value="1"/>
</dbReference>
<dbReference type="PROSITE" id="PS50042">
    <property type="entry name" value="CNMP_BINDING_3"/>
    <property type="match status" value="1"/>
</dbReference>
<protein>
    <recommendedName>
        <fullName>Potassium/sodium hyperpolarization-activated cyclic nucleotide-gated channel 1</fullName>
    </recommendedName>
    <alternativeName>
        <fullName>Brain cyclic nucleotide-gated channel 1</fullName>
        <shortName>BCNG-1</shortName>
    </alternativeName>
</protein>
<organism>
    <name type="scientific">Homo sapiens</name>
    <name type="common">Human</name>
    <dbReference type="NCBI Taxonomy" id="9606"/>
    <lineage>
        <taxon>Eukaryota</taxon>
        <taxon>Metazoa</taxon>
        <taxon>Chordata</taxon>
        <taxon>Craniata</taxon>
        <taxon>Vertebrata</taxon>
        <taxon>Euteleostomi</taxon>
        <taxon>Mammalia</taxon>
        <taxon>Eutheria</taxon>
        <taxon>Euarchontoglires</taxon>
        <taxon>Primates</taxon>
        <taxon>Haplorrhini</taxon>
        <taxon>Catarrhini</taxon>
        <taxon>Hominidae</taxon>
        <taxon>Homo</taxon>
    </lineage>
</organism>
<feature type="chain" id="PRO_0000054107" description="Potassium/sodium hyperpolarization-activated cyclic nucleotide-gated channel 1">
    <location>
        <begin position="1"/>
        <end position="890"/>
    </location>
</feature>
<feature type="topological domain" description="Cytoplasmic" evidence="7">
    <location>
        <begin position="1"/>
        <end position="142"/>
    </location>
</feature>
<feature type="transmembrane region" description="Helical; Name=Segment S1" evidence="7 10 15 16 17 18">
    <location>
        <begin position="143"/>
        <end position="164"/>
    </location>
</feature>
<feature type="topological domain" description="Extracellular" evidence="7">
    <location>
        <begin position="165"/>
        <end position="173"/>
    </location>
</feature>
<feature type="transmembrane region" description="Helical; Name=Segment S2" evidence="7 10 15 16 17 18">
    <location>
        <begin position="174"/>
        <end position="194"/>
    </location>
</feature>
<feature type="topological domain" description="Cytoplasmic" evidence="7">
    <location>
        <begin position="195"/>
        <end position="215"/>
    </location>
</feature>
<feature type="transmembrane region" description="Helical; Name=Segment S3" evidence="7 10 15 16 17 18">
    <location>
        <begin position="216"/>
        <end position="236"/>
    </location>
</feature>
<feature type="topological domain" description="Extracellular" evidence="7">
    <location>
        <begin position="237"/>
        <end position="260"/>
    </location>
</feature>
<feature type="transmembrane region" description="Helical; Voltage-sensor; Name=Segment S4" evidence="7 10 15 16 17 18">
    <location>
        <begin position="261"/>
        <end position="281"/>
    </location>
</feature>
<feature type="topological domain" description="Cytoplasmic" evidence="7">
    <location>
        <begin position="282"/>
        <end position="295"/>
    </location>
</feature>
<feature type="transmembrane region" description="Helical; Name=Segment S5" evidence="15 16 17 18">
    <location>
        <begin position="296"/>
        <end position="318"/>
    </location>
</feature>
<feature type="topological domain" description="Extracellular" evidence="7">
    <location>
        <begin position="319"/>
        <end position="344"/>
    </location>
</feature>
<feature type="intramembrane region" description="Pore-forming; Name=Segment H5" evidence="7 10 15 16 17 18">
    <location>
        <begin position="345"/>
        <end position="366"/>
    </location>
</feature>
<feature type="topological domain" description="Extracellular" evidence="7">
    <location>
        <begin position="367"/>
        <end position="371"/>
    </location>
</feature>
<feature type="transmembrane region" description="Helical; Name=Segment S6" evidence="7 10 15 16 17 18">
    <location>
        <begin position="372"/>
        <end position="392"/>
    </location>
</feature>
<feature type="topological domain" description="Cytoplasmic" evidence="7">
    <location>
        <begin position="393"/>
        <end position="890"/>
    </location>
</feature>
<feature type="region of interest" description="Disordered" evidence="14">
    <location>
        <begin position="1"/>
        <end position="93"/>
    </location>
</feature>
<feature type="region of interest" description="Disordered" evidence="3">
    <location>
        <begin position="644"/>
        <end position="692"/>
    </location>
</feature>
<feature type="region of interest" description="Disordered" evidence="3">
    <location>
        <begin position="725"/>
        <end position="796"/>
    </location>
</feature>
<feature type="region of interest" description="Disordered" evidence="3">
    <location>
        <begin position="845"/>
        <end position="890"/>
    </location>
</feature>
<feature type="short sequence motif" description="Selectivity filter" evidence="14">
    <location>
        <begin position="358"/>
        <end position="362"/>
    </location>
</feature>
<feature type="compositionally biased region" description="Low complexity" evidence="3">
    <location>
        <begin position="8"/>
        <end position="34"/>
    </location>
</feature>
<feature type="compositionally biased region" description="Gly residues" evidence="3">
    <location>
        <begin position="62"/>
        <end position="77"/>
    </location>
</feature>
<feature type="compositionally biased region" description="Low complexity" evidence="3">
    <location>
        <begin position="644"/>
        <end position="691"/>
    </location>
</feature>
<feature type="compositionally biased region" description="Low complexity" evidence="3">
    <location>
        <begin position="731"/>
        <end position="749"/>
    </location>
</feature>
<feature type="compositionally biased region" description="Polar residues" evidence="3">
    <location>
        <begin position="770"/>
        <end position="780"/>
    </location>
</feature>
<feature type="compositionally biased region" description="Pro residues" evidence="3">
    <location>
        <begin position="854"/>
        <end position="865"/>
    </location>
</feature>
<feature type="compositionally biased region" description="Basic and acidic residues" evidence="3">
    <location>
        <begin position="880"/>
        <end position="890"/>
    </location>
</feature>
<feature type="binding site" evidence="10 14 16 17">
    <location>
        <position position="539"/>
    </location>
    <ligand>
        <name>3',5'-cyclic AMP</name>
        <dbReference type="ChEBI" id="CHEBI:58165"/>
    </ligand>
</feature>
<feature type="binding site" evidence="10 17">
    <location>
        <position position="540"/>
    </location>
    <ligand>
        <name>3',5'-cyclic AMP</name>
        <dbReference type="ChEBI" id="CHEBI:58165"/>
    </ligand>
</feature>
<feature type="binding site" evidence="10 14 16 17">
    <location>
        <position position="542"/>
    </location>
    <ligand>
        <name>3',5'-cyclic AMP</name>
        <dbReference type="ChEBI" id="CHEBI:58165"/>
    </ligand>
</feature>
<feature type="binding site" evidence="10 14 16 17">
    <location>
        <position position="549"/>
    </location>
    <ligand>
        <name>3',5'-cyclic AMP</name>
        <dbReference type="ChEBI" id="CHEBI:58165"/>
    </ligand>
</feature>
<feature type="binding site" evidence="10 14 16 17">
    <location>
        <position position="550"/>
    </location>
    <ligand>
        <name>3',5'-cyclic AMP</name>
        <dbReference type="ChEBI" id="CHEBI:58165"/>
    </ligand>
</feature>
<feature type="binding site" evidence="1">
    <location>
        <position position="590"/>
    </location>
    <ligand>
        <name>3',5'-cyclic AMP</name>
        <dbReference type="ChEBI" id="CHEBI:58165"/>
    </ligand>
</feature>
<feature type="binding site" evidence="10 17">
    <location>
        <position position="593"/>
    </location>
    <ligand>
        <name>3',5'-cyclic AMP</name>
        <dbReference type="ChEBI" id="CHEBI:58165"/>
    </ligand>
</feature>
<feature type="glycosylation site" description="N-linked (GlcNAc...) asparagine" evidence="2">
    <location>
        <position position="338"/>
    </location>
</feature>
<feature type="sequence variant" id="VAR_061105" description="In dbSNP:rs56164833.">
    <original>P</original>
    <variation>S</variation>
    <location>
        <position position="42"/>
    </location>
</feature>
<feature type="sequence variant" id="VAR_071825" description="In DEE24; likely benign; dbSNP:rs544994462." evidence="5">
    <original>G</original>
    <variation>V</variation>
    <location>
        <position position="47"/>
    </location>
</feature>
<feature type="sequence variant" id="VAR_085692" evidence="11">
    <location>
        <begin position="72"/>
        <end position="74"/>
    </location>
</feature>
<feature type="sequence variant" id="VAR_082653" description="In GEFSP10; uncertain significance." evidence="9">
    <original>E</original>
    <variation>A</variation>
    <location>
        <position position="85"/>
    </location>
</feature>
<feature type="sequence variant" id="VAR_071826" description="In DEE24; dominant-negative mutation resulting in gain of channel function; dbSNP:rs587777492." evidence="5">
    <original>S</original>
    <variation>F</variation>
    <location>
        <position position="100"/>
    </location>
</feature>
<feature type="sequence variant" id="VAR_082654" description="In DEE24; uncertain significance." evidence="9">
    <original>F</original>
    <variation>Y</variation>
    <location>
        <position position="143"/>
    </location>
</feature>
<feature type="sequence variant" id="VAR_078216" description="In DEE24; affects channel gating properties; the half-activation voltage is shifted to the depolarizing direction; significantly faster activation and slower deactivation kinetics than wild-type channel; dbSNP:rs1057519548." evidence="6 9">
    <original>M</original>
    <variation>I</variation>
    <location>
        <position position="153"/>
    </location>
</feature>
<feature type="sequence variant" id="VAR_082655" description="In GEFSP10; uncertain significance; reduced current density; affects channel gating properties as the half-activation voltage is shifted to the depolarizing direction; neurons expressing mutant channels show increased excitability; dbSNP:rs1561230606." evidence="8">
    <original>L</original>
    <variation>V</variation>
    <location>
        <position position="157"/>
    </location>
</feature>
<feature type="sequence variant" id="VAR_082656" description="In GEFSP10; uncertain significance." evidence="9">
    <original>T</original>
    <variation>R</variation>
    <location>
        <position position="171"/>
    </location>
</feature>
<feature type="sequence variant" id="VAR_082657" description="In GEFSP10; uncertain significance." evidence="9">
    <original>T</original>
    <variation>P</variation>
    <location>
        <position position="172"/>
    </location>
</feature>
<feature type="sequence variant" id="VAR_082658" description="In GEFSP10; significantly decreased current densities; dbSNP:rs1561230486." evidence="9">
    <original>M</original>
    <variation>R</variation>
    <location>
        <position position="243"/>
    </location>
</feature>
<feature type="sequence variant" id="VAR_082659" description="In GEFSP10; uncertain significance." evidence="9">
    <original>T</original>
    <variation>I</variation>
    <location>
        <position position="260"/>
    </location>
</feature>
<feature type="sequence variant" id="VAR_082660" description="In DEE24; uncertain significance; dbSNP:rs1554037378." evidence="9">
    <original>K</original>
    <variation>E</variation>
    <location>
        <position position="261"/>
    </location>
</feature>
<feature type="sequence variant" id="VAR_082661" description="Found in a patient with infantile-onset epilepsy; uncertain significance; dbSNP:rs763339068." evidence="9">
    <original>S</original>
    <variation>C</variation>
    <location>
        <position position="264"/>
    </location>
</feature>
<feature type="sequence variant" id="VAR_071827" description="In DEE24; dominant-negative mutation resulting in loss of channel currents; dbSNP:rs587777493." evidence="5">
    <original>S</original>
    <variation>P</variation>
    <location>
        <position position="272"/>
    </location>
</feature>
<feature type="sequence variant" id="VAR_082662" description="Found in a patient with childhood focal epilepsy; uncertain significance." evidence="9">
    <original>I</original>
    <variation>T</variation>
    <location>
        <position position="275"/>
    </location>
</feature>
<feature type="sequence variant" id="VAR_071828" description="In DEE24; results in a gain of channel function; dbSNP:rs587777495." evidence="5">
    <original>H</original>
    <variation>Y</variation>
    <location>
        <position position="279"/>
    </location>
</feature>
<feature type="sequence variant" id="VAR_071829" description="In DEE24; dominant-negative mutation resulting in loss of channel currents; dbSNP:rs587777494." evidence="5">
    <original>R</original>
    <variation>T</variation>
    <location>
        <position position="297"/>
    </location>
</feature>
<feature type="sequence variant" id="VAR_082663" description="In DEE24; absence of hyperpolarization-activated currents; highly reduced amount of protein at the cell membrane; dbSNP:rs1057521989." evidence="9">
    <original>M</original>
    <variation>L</variation>
    <location>
        <position position="305"/>
    </location>
</feature>
<feature type="sequence variant" id="VAR_082664" description="In GEFSP10; decreased current density; voltage-dependence of activation as well as the activation and deactivation kinetics are not altered; dbSNP:rs1318391259." evidence="9">
    <original>C</original>
    <variation>S</variation>
    <location>
        <position position="329"/>
    </location>
</feature>
<feature type="sequence variant" id="VAR_082665" description="Found in a patient with intellectual disability and language delay; uncertain significance." evidence="9">
    <original>M</original>
    <variation>R</variation>
    <location>
        <position position="379"/>
    </location>
</feature>
<feature type="sequence variant" id="VAR_082666" description="In GEFSP10; affects channel gating properties as the half-activation voltage is shifted to the hyperpolarizing direction." evidence="9">
    <original>G</original>
    <variation>C</variation>
    <location>
        <position position="391"/>
    </location>
</feature>
<feature type="sequence variant" id="VAR_078217" description="In DEE24; results in absence of hyperpolarization-activated currents; reduced amount of protein at the cell membrane; dbSNP:rs1057519547." evidence="6 9">
    <original>G</original>
    <variation>D</variation>
    <location>
        <position position="391"/>
    </location>
</feature>
<feature type="sequence variant" id="VAR_082667" description="In GEFSP10; affects channel gating properties as the half-activation voltage is shifted to the depolarizing direction; reduced amount of protein at the cell membrane; dbSNP:rs1561139569." evidence="9">
    <original>G</original>
    <variation>S</variation>
    <location>
        <position position="391"/>
    </location>
</feature>
<feature type="sequence variant" id="VAR_082668" description="In DEE24; the half-activation voltage is shifted to the depolarizing direction; reduced amount of protein at the cell membrane." evidence="9">
    <original>I</original>
    <variation>L</variation>
    <location>
        <position position="397"/>
    </location>
</feature>
<feature type="sequence variant" id="VAR_082669" description="In DEE24; results in absence of hyperpolarization-activated currents; reduced amount of protein at the cell membrane." evidence="9">
    <original>S</original>
    <variation>P</variation>
    <location>
        <position position="399"/>
    </location>
</feature>
<feature type="sequence variant" id="VAR_071830" description="In DEE24; results in a gain of channel function; dbSNP:rs587777491." evidence="5">
    <original>D</original>
    <variation>H</variation>
    <location>
        <position position="401"/>
    </location>
</feature>
<feature type="sequence variant" id="VAR_082670" description="In GEFSP10; results in a depolarizing shift of the half-activation voltage and faster activation kinetics; dbSNP:rs1561120793." evidence="9">
    <original>V</original>
    <variation>M</variation>
    <location>
        <position position="414"/>
    </location>
</feature>
<feature type="sequence variant" id="VAR_082671" description="In GEFSP10; decreased current densities; half-activation voltage is slightly shifted to the hyperpolarizing direction; dbSNP:rs1561081319." evidence="9">
    <original>R</original>
    <variation>Q</variation>
    <location>
        <position position="590"/>
    </location>
</feature>
<feature type="sequence variant" id="VAR_082672" description="In GEFSP10; uncertain significance." evidence="9">
    <original>S</original>
    <variation>Y</variation>
    <location>
        <position position="680"/>
    </location>
</feature>
<feature type="sequence variant" id="VAR_082673" description="In GEFSP10; uncertain significance; dbSNP:rs1486444621." evidence="9">
    <original>R</original>
    <variation>G</variation>
    <location>
        <position position="715"/>
    </location>
</feature>
<feature type="sequence variant" id="VAR_085693" description="Found in a patient with sinus bradychardia; uncertain significance; affects channel properties as it results in a negative shift in the threshold voltage of activation and slower activation kinetics compared to the wild-type." evidence="11">
    <original>P</original>
    <variation>A</variation>
    <location>
        <position position="851"/>
    </location>
</feature>
<feature type="sequence conflict" description="In Ref. 2; AAC39759." evidence="13" ref="2">
    <original>L</original>
    <variation>F</variation>
    <location>
        <position position="786"/>
    </location>
</feature>
<feature type="sequence conflict" description="In Ref. 2; AAC39759." evidence="13" ref="2">
    <original>S</original>
    <variation>W</variation>
    <location>
        <position position="789"/>
    </location>
</feature>
<feature type="sequence conflict" description="In Ref. 2; AAC39759." evidence="13" ref="2">
    <original>L</original>
    <variation>F</variation>
    <location>
        <position position="841"/>
    </location>
</feature>
<feature type="sequence conflict" description="In Ref. 2; AAC39759." evidence="13" ref="2">
    <original>P</original>
    <variation>L</variation>
    <location>
        <position position="857"/>
    </location>
</feature>
<feature type="sequence conflict" description="In Ref. 2; AAC39759." evidence="13" ref="2">
    <original>P</original>
    <variation>L</variation>
    <location>
        <position position="861"/>
    </location>
</feature>
<feature type="helix" evidence="22">
    <location>
        <begin position="95"/>
        <end position="101"/>
    </location>
</feature>
<feature type="strand" evidence="23">
    <location>
        <begin position="102"/>
        <end position="104"/>
    </location>
</feature>
<feature type="helix" evidence="22">
    <location>
        <begin position="108"/>
        <end position="114"/>
    </location>
</feature>
<feature type="helix" evidence="22">
    <location>
        <begin position="117"/>
        <end position="127"/>
    </location>
</feature>
<feature type="turn" evidence="22">
    <location>
        <begin position="128"/>
        <end position="130"/>
    </location>
</feature>
<feature type="helix" evidence="22">
    <location>
        <begin position="140"/>
        <end position="166"/>
    </location>
</feature>
<feature type="helix" evidence="22">
    <location>
        <begin position="173"/>
        <end position="192"/>
    </location>
</feature>
<feature type="turn" evidence="22">
    <location>
        <begin position="193"/>
        <end position="195"/>
    </location>
</feature>
<feature type="strand" evidence="20">
    <location>
        <begin position="198"/>
        <end position="200"/>
    </location>
</feature>
<feature type="turn" evidence="21">
    <location>
        <begin position="201"/>
        <end position="203"/>
    </location>
</feature>
<feature type="strand" evidence="21">
    <location>
        <begin position="204"/>
        <end position="206"/>
    </location>
</feature>
<feature type="helix" evidence="22">
    <location>
        <begin position="210"/>
        <end position="218"/>
    </location>
</feature>
<feature type="turn" evidence="22">
    <location>
        <begin position="219"/>
        <end position="221"/>
    </location>
</feature>
<feature type="helix" evidence="22">
    <location>
        <begin position="222"/>
        <end position="227"/>
    </location>
</feature>
<feature type="helix" evidence="22">
    <location>
        <begin position="232"/>
        <end position="240"/>
    </location>
</feature>
<feature type="helix" evidence="22">
    <location>
        <begin position="253"/>
        <end position="264"/>
    </location>
</feature>
<feature type="helix" evidence="22">
    <location>
        <begin position="265"/>
        <end position="269"/>
    </location>
</feature>
<feature type="helix" evidence="22">
    <location>
        <begin position="270"/>
        <end position="289"/>
    </location>
</feature>
<feature type="helix" evidence="22">
    <location>
        <begin position="293"/>
        <end position="322"/>
    </location>
</feature>
<feature type="helix" evidence="22">
    <location>
        <begin position="330"/>
        <end position="333"/>
    </location>
</feature>
<feature type="strand" evidence="20">
    <location>
        <begin position="337"/>
        <end position="339"/>
    </location>
</feature>
<feature type="helix" evidence="22">
    <location>
        <begin position="341"/>
        <end position="356"/>
    </location>
</feature>
<feature type="strand" evidence="22">
    <location>
        <begin position="362"/>
        <end position="364"/>
    </location>
</feature>
<feature type="helix" evidence="22">
    <location>
        <begin position="369"/>
        <end position="400"/>
    </location>
</feature>
<feature type="helix" evidence="22">
    <location>
        <begin position="402"/>
        <end position="420"/>
    </location>
</feature>
<feature type="helix" evidence="22">
    <location>
        <begin position="425"/>
        <end position="439"/>
    </location>
</feature>
<feature type="helix" evidence="22">
    <location>
        <begin position="446"/>
        <end position="452"/>
    </location>
</feature>
<feature type="helix" evidence="22">
    <location>
        <begin position="455"/>
        <end position="470"/>
    </location>
</feature>
<feature type="helix" evidence="22">
    <location>
        <begin position="474"/>
        <end position="477"/>
    </location>
</feature>
<feature type="helix" evidence="22">
    <location>
        <begin position="481"/>
        <end position="488"/>
    </location>
</feature>
<feature type="strand" evidence="22">
    <location>
        <begin position="492"/>
        <end position="496"/>
    </location>
</feature>
<feature type="strand" evidence="22">
    <location>
        <begin position="501"/>
        <end position="503"/>
    </location>
</feature>
<feature type="strand" evidence="19">
    <location>
        <begin position="505"/>
        <end position="507"/>
    </location>
</feature>
<feature type="strand" evidence="22">
    <location>
        <begin position="511"/>
        <end position="518"/>
    </location>
</feature>
<feature type="strand" evidence="22">
    <location>
        <begin position="520"/>
        <end position="523"/>
    </location>
</feature>
<feature type="strand" evidence="20">
    <location>
        <begin position="525"/>
        <end position="527"/>
    </location>
</feature>
<feature type="strand" evidence="22">
    <location>
        <begin position="530"/>
        <end position="532"/>
    </location>
</feature>
<feature type="helix" evidence="22">
    <location>
        <begin position="540"/>
        <end position="544"/>
    </location>
</feature>
<feature type="strand" evidence="22">
    <location>
        <begin position="550"/>
        <end position="557"/>
    </location>
</feature>
<feature type="strand" evidence="22">
    <location>
        <begin position="559"/>
        <end position="565"/>
    </location>
</feature>
<feature type="helix" evidence="22">
    <location>
        <begin position="566"/>
        <end position="574"/>
    </location>
</feature>
<feature type="helix" evidence="22">
    <location>
        <begin position="577"/>
        <end position="583"/>
    </location>
</feature>
<feature type="helix" evidence="20">
    <location>
        <begin position="599"/>
        <end position="610"/>
    </location>
</feature>
<feature type="helix" evidence="20">
    <location>
        <begin position="616"/>
        <end position="634"/>
    </location>
</feature>